<comment type="function">
    <text evidence="2">May inhibit the adenylyl cyclase-stimulating activity of guanine nucleotide-binding protein G(s) subunit alpha which is produced from the same locus in a different open reading frame.</text>
</comment>
<comment type="subunit">
    <text evidence="1">Interacts with the N-terminal region of the XLas isoforms of guanine nucleotide-binding protein G(s) subunit alpha.</text>
</comment>
<comment type="subcellular location">
    <subcellularLocation>
        <location>Cell membrane</location>
        <topology>Peripheral membrane protein</topology>
    </subcellularLocation>
    <subcellularLocation>
        <location evidence="1">Cell projection</location>
        <location evidence="1">Ruffle</location>
    </subcellularLocation>
    <text evidence="1">Predominantly associated with cell membrane ruffles.</text>
</comment>
<comment type="miscellaneous">
    <text evidence="3">This protein is produced by a bicistronic gene which also produces guanine nucleotide-binding protein G(s) subunit alpha from an overlapping reading frame.</text>
</comment>
<comment type="similarity">
    <text evidence="5">Belongs to the ALEX family.</text>
</comment>
<comment type="sequence caution" evidence="5">
    <conflict type="erroneous initiation">
        <sequence resource="EMBL-CDS" id="BAC26987"/>
    </conflict>
</comment>
<protein>
    <recommendedName>
        <fullName>Protein ALEX</fullName>
    </recommendedName>
    <alternativeName>
        <fullName>Alternative gene product encoded by XL-exon</fullName>
    </alternativeName>
</protein>
<feature type="chain" id="PRO_0000253965" description="Protein ALEX">
    <location>
        <begin position="1"/>
        <end position="725"/>
    </location>
</feature>
<feature type="region of interest" description="Disordered" evidence="4">
    <location>
        <begin position="1"/>
        <end position="93"/>
    </location>
</feature>
<feature type="region of interest" description="Disordered" evidence="4">
    <location>
        <begin position="177"/>
        <end position="226"/>
    </location>
</feature>
<feature type="region of interest" description="Disordered" evidence="4">
    <location>
        <begin position="256"/>
        <end position="340"/>
    </location>
</feature>
<feature type="region of interest" description="Disordered" evidence="4">
    <location>
        <begin position="396"/>
        <end position="481"/>
    </location>
</feature>
<feature type="region of interest" description="Disordered" evidence="4">
    <location>
        <begin position="508"/>
        <end position="528"/>
    </location>
</feature>
<feature type="region of interest" description="Disordered" evidence="4">
    <location>
        <begin position="584"/>
        <end position="624"/>
    </location>
</feature>
<feature type="region of interest" description="Disordered" evidence="4">
    <location>
        <begin position="638"/>
        <end position="675"/>
    </location>
</feature>
<feature type="compositionally biased region" description="Basic residues" evidence="4">
    <location>
        <begin position="41"/>
        <end position="51"/>
    </location>
</feature>
<feature type="compositionally biased region" description="Polar residues" evidence="4">
    <location>
        <begin position="260"/>
        <end position="276"/>
    </location>
</feature>
<feature type="compositionally biased region" description="Basic and acidic residues" evidence="4">
    <location>
        <begin position="297"/>
        <end position="307"/>
    </location>
</feature>
<feature type="compositionally biased region" description="Basic and acidic residues" evidence="4">
    <location>
        <begin position="314"/>
        <end position="326"/>
    </location>
</feature>
<feature type="compositionally biased region" description="Pro residues" evidence="4">
    <location>
        <begin position="423"/>
        <end position="442"/>
    </location>
</feature>
<feature type="compositionally biased region" description="Pro residues" evidence="4">
    <location>
        <begin position="459"/>
        <end position="473"/>
    </location>
</feature>
<feature type="compositionally biased region" description="Low complexity" evidence="4">
    <location>
        <begin position="584"/>
        <end position="598"/>
    </location>
</feature>
<feature type="compositionally biased region" description="Low complexity" evidence="4">
    <location>
        <begin position="643"/>
        <end position="658"/>
    </location>
</feature>
<feature type="sequence conflict" description="In Ref. 3." evidence="5" ref="3">
    <original>Q</original>
    <variation>E</variation>
    <location>
        <position position="297"/>
    </location>
</feature>
<evidence type="ECO:0000250" key="1"/>
<evidence type="ECO:0000250" key="2">
    <source>
        <dbReference type="UniProtKB" id="P84996"/>
    </source>
</evidence>
<evidence type="ECO:0000250" key="3">
    <source>
        <dbReference type="UniProtKB" id="Q9Z213"/>
    </source>
</evidence>
<evidence type="ECO:0000256" key="4">
    <source>
        <dbReference type="SAM" id="MobiDB-lite"/>
    </source>
</evidence>
<evidence type="ECO:0000305" key="5"/>
<evidence type="ECO:0000312" key="6">
    <source>
        <dbReference type="EMBL" id="AAS00602.1"/>
    </source>
</evidence>
<evidence type="ECO:0000312" key="7">
    <source>
        <dbReference type="EMBL" id="BAC26987.1"/>
    </source>
</evidence>
<evidence type="ECO:0000312" key="8">
    <source>
        <dbReference type="MGI" id="MGI:95777"/>
    </source>
</evidence>
<accession>Q6R0H6</accession>
<accession>A6PW72</accession>
<accession>Q8BIR3</accession>
<gene>
    <name evidence="8" type="primary">Gnas</name>
    <name evidence="8" type="synonym">Gnas1</name>
</gene>
<proteinExistence type="evidence at transcript level"/>
<sequence length="725" mass="79084">MSPSPTRLAVRSVDPQKTPNLTSKAPARPSRKSEWVETTAHLRRKPCHSRHNSPAWEISGPPWSSQDHLGPHQASKPSTQRFWSPGPPLARAQAWEPIPPHQKKLCHLSSTSLPRETIASLPCKSQTLRQEVRKHWSPELFPRSPGTSDLKTLASEKTTALPLKNLCHFRSVEKNSGAIAHPQDSRESSHKSALAASSRQSRSRVRSASLPPRTRLPSGSEAPLTDHSARLSDLLLTSHATAPRWRSPDPCLRLAEPPLGSTTTPLSIWTAPQSQVMARPSKSREPQIRASAQRDPQLSEKQPRWKEALPPPLRWKEKSPLRREGTDLPPSLKQWMPSQPLLPKPSLPDLMLELLRIPRCSQIARAMPEKTGQPQERLQISSRILKNSKKPQLSAPILTEGQPQSPQPLLPSPSLKAAEIQPPSQPPRQSLPPRPSLPPGQPLSPRWSPQPRQSLPPWRSLPPGQPLSPPRSPLPGQSPLLEPIRPLEQSLAPQQCQPLLGQLPLGQPMQVHWSGEPGHSQLLPPLGHPFLPAQQLPPGQPLLPAQSLLAGQPLPPPAGPILDPPAPRSRLLTRLLRGLLRGRLPGLTSTSGAEAAAGTRHRLASARSSPPVMSRKKGPPAASSGFCGETAALACPGATRSGATQSATSSPEPSEAASVYPSVPDHDPSAPGRPRILWRRGANRCAKKPLRCESRSAQIRNAASSSTSNWRRRRWTTCVHTACCF</sequence>
<reference evidence="6" key="1">
    <citation type="journal article" date="2004" name="Proc. Natl. Acad. Sci. U.S.A.">
        <title>XL alpha-s, the extra-long form of the alpha subunit of the Gs G protein, is significantly longer than suspected, and so is its companion Alex.</title>
        <authorList>
            <person name="Abramowitz J."/>
            <person name="Grenet D."/>
            <person name="Birnbaumer M."/>
            <person name="Torres H.N."/>
            <person name="Birnbaumer L."/>
        </authorList>
    </citation>
    <scope>NUCLEOTIDE SEQUENCE [MRNA]</scope>
    <source>
        <strain evidence="6">FVB/N</strain>
        <tissue evidence="6">Brain</tissue>
    </source>
</reference>
<reference key="2">
    <citation type="journal article" date="2009" name="PLoS Biol.">
        <title>Lineage-specific biology revealed by a finished genome assembly of the mouse.</title>
        <authorList>
            <person name="Church D.M."/>
            <person name="Goodstadt L."/>
            <person name="Hillier L.W."/>
            <person name="Zody M.C."/>
            <person name="Goldstein S."/>
            <person name="She X."/>
            <person name="Bult C.J."/>
            <person name="Agarwala R."/>
            <person name="Cherry J.L."/>
            <person name="DiCuccio M."/>
            <person name="Hlavina W."/>
            <person name="Kapustin Y."/>
            <person name="Meric P."/>
            <person name="Maglott D."/>
            <person name="Birtle Z."/>
            <person name="Marques A.C."/>
            <person name="Graves T."/>
            <person name="Zhou S."/>
            <person name="Teague B."/>
            <person name="Potamousis K."/>
            <person name="Churas C."/>
            <person name="Place M."/>
            <person name="Herschleb J."/>
            <person name="Runnheim R."/>
            <person name="Forrest D."/>
            <person name="Amos-Landgraf J."/>
            <person name="Schwartz D.C."/>
            <person name="Cheng Z."/>
            <person name="Lindblad-Toh K."/>
            <person name="Eichler E.E."/>
            <person name="Ponting C.P."/>
        </authorList>
    </citation>
    <scope>NUCLEOTIDE SEQUENCE [LARGE SCALE GENOMIC DNA]</scope>
    <source>
        <strain>C57BL/6J</strain>
    </source>
</reference>
<reference evidence="5 7" key="3">
    <citation type="journal article" date="2005" name="Science">
        <title>The transcriptional landscape of the mammalian genome.</title>
        <authorList>
            <person name="Carninci P."/>
            <person name="Kasukawa T."/>
            <person name="Katayama S."/>
            <person name="Gough J."/>
            <person name="Frith M.C."/>
            <person name="Maeda N."/>
            <person name="Oyama R."/>
            <person name="Ravasi T."/>
            <person name="Lenhard B."/>
            <person name="Wells C."/>
            <person name="Kodzius R."/>
            <person name="Shimokawa K."/>
            <person name="Bajic V.B."/>
            <person name="Brenner S.E."/>
            <person name="Batalov S."/>
            <person name="Forrest A.R."/>
            <person name="Zavolan M."/>
            <person name="Davis M.J."/>
            <person name="Wilming L.G."/>
            <person name="Aidinis V."/>
            <person name="Allen J.E."/>
            <person name="Ambesi-Impiombato A."/>
            <person name="Apweiler R."/>
            <person name="Aturaliya R.N."/>
            <person name="Bailey T.L."/>
            <person name="Bansal M."/>
            <person name="Baxter L."/>
            <person name="Beisel K.W."/>
            <person name="Bersano T."/>
            <person name="Bono H."/>
            <person name="Chalk A.M."/>
            <person name="Chiu K.P."/>
            <person name="Choudhary V."/>
            <person name="Christoffels A."/>
            <person name="Clutterbuck D.R."/>
            <person name="Crowe M.L."/>
            <person name="Dalla E."/>
            <person name="Dalrymple B.P."/>
            <person name="de Bono B."/>
            <person name="Della Gatta G."/>
            <person name="di Bernardo D."/>
            <person name="Down T."/>
            <person name="Engstrom P."/>
            <person name="Fagiolini M."/>
            <person name="Faulkner G."/>
            <person name="Fletcher C.F."/>
            <person name="Fukushima T."/>
            <person name="Furuno M."/>
            <person name="Futaki S."/>
            <person name="Gariboldi M."/>
            <person name="Georgii-Hemming P."/>
            <person name="Gingeras T.R."/>
            <person name="Gojobori T."/>
            <person name="Green R.E."/>
            <person name="Gustincich S."/>
            <person name="Harbers M."/>
            <person name="Hayashi Y."/>
            <person name="Hensch T.K."/>
            <person name="Hirokawa N."/>
            <person name="Hill D."/>
            <person name="Huminiecki L."/>
            <person name="Iacono M."/>
            <person name="Ikeo K."/>
            <person name="Iwama A."/>
            <person name="Ishikawa T."/>
            <person name="Jakt M."/>
            <person name="Kanapin A."/>
            <person name="Katoh M."/>
            <person name="Kawasawa Y."/>
            <person name="Kelso J."/>
            <person name="Kitamura H."/>
            <person name="Kitano H."/>
            <person name="Kollias G."/>
            <person name="Krishnan S.P."/>
            <person name="Kruger A."/>
            <person name="Kummerfeld S.K."/>
            <person name="Kurochkin I.V."/>
            <person name="Lareau L.F."/>
            <person name="Lazarevic D."/>
            <person name="Lipovich L."/>
            <person name="Liu J."/>
            <person name="Liuni S."/>
            <person name="McWilliam S."/>
            <person name="Madan Babu M."/>
            <person name="Madera M."/>
            <person name="Marchionni L."/>
            <person name="Matsuda H."/>
            <person name="Matsuzawa S."/>
            <person name="Miki H."/>
            <person name="Mignone F."/>
            <person name="Miyake S."/>
            <person name="Morris K."/>
            <person name="Mottagui-Tabar S."/>
            <person name="Mulder N."/>
            <person name="Nakano N."/>
            <person name="Nakauchi H."/>
            <person name="Ng P."/>
            <person name="Nilsson R."/>
            <person name="Nishiguchi S."/>
            <person name="Nishikawa S."/>
            <person name="Nori F."/>
            <person name="Ohara O."/>
            <person name="Okazaki Y."/>
            <person name="Orlando V."/>
            <person name="Pang K.C."/>
            <person name="Pavan W.J."/>
            <person name="Pavesi G."/>
            <person name="Pesole G."/>
            <person name="Petrovsky N."/>
            <person name="Piazza S."/>
            <person name="Reed J."/>
            <person name="Reid J.F."/>
            <person name="Ring B.Z."/>
            <person name="Ringwald M."/>
            <person name="Rost B."/>
            <person name="Ruan Y."/>
            <person name="Salzberg S.L."/>
            <person name="Sandelin A."/>
            <person name="Schneider C."/>
            <person name="Schoenbach C."/>
            <person name="Sekiguchi K."/>
            <person name="Semple C.A."/>
            <person name="Seno S."/>
            <person name="Sessa L."/>
            <person name="Sheng Y."/>
            <person name="Shibata Y."/>
            <person name="Shimada H."/>
            <person name="Shimada K."/>
            <person name="Silva D."/>
            <person name="Sinclair B."/>
            <person name="Sperling S."/>
            <person name="Stupka E."/>
            <person name="Sugiura K."/>
            <person name="Sultana R."/>
            <person name="Takenaka Y."/>
            <person name="Taki K."/>
            <person name="Tammoja K."/>
            <person name="Tan S.L."/>
            <person name="Tang S."/>
            <person name="Taylor M.S."/>
            <person name="Tegner J."/>
            <person name="Teichmann S.A."/>
            <person name="Ueda H.R."/>
            <person name="van Nimwegen E."/>
            <person name="Verardo R."/>
            <person name="Wei C.L."/>
            <person name="Yagi K."/>
            <person name="Yamanishi H."/>
            <person name="Zabarovsky E."/>
            <person name="Zhu S."/>
            <person name="Zimmer A."/>
            <person name="Hide W."/>
            <person name="Bult C."/>
            <person name="Grimmond S.M."/>
            <person name="Teasdale R.D."/>
            <person name="Liu E.T."/>
            <person name="Brusic V."/>
            <person name="Quackenbush J."/>
            <person name="Wahlestedt C."/>
            <person name="Mattick J.S."/>
            <person name="Hume D.A."/>
            <person name="Kai C."/>
            <person name="Sasaki D."/>
            <person name="Tomaru Y."/>
            <person name="Fukuda S."/>
            <person name="Kanamori-Katayama M."/>
            <person name="Suzuki M."/>
            <person name="Aoki J."/>
            <person name="Arakawa T."/>
            <person name="Iida J."/>
            <person name="Imamura K."/>
            <person name="Itoh M."/>
            <person name="Kato T."/>
            <person name="Kawaji H."/>
            <person name="Kawagashira N."/>
            <person name="Kawashima T."/>
            <person name="Kojima M."/>
            <person name="Kondo S."/>
            <person name="Konno H."/>
            <person name="Nakano K."/>
            <person name="Ninomiya N."/>
            <person name="Nishio T."/>
            <person name="Okada M."/>
            <person name="Plessy C."/>
            <person name="Shibata K."/>
            <person name="Shiraki T."/>
            <person name="Suzuki S."/>
            <person name="Tagami M."/>
            <person name="Waki K."/>
            <person name="Watahiki A."/>
            <person name="Okamura-Oho Y."/>
            <person name="Suzuki H."/>
            <person name="Kawai J."/>
            <person name="Hayashizaki Y."/>
        </authorList>
    </citation>
    <scope>NUCLEOTIDE SEQUENCE [LARGE SCALE MRNA] OF 297-725</scope>
    <source>
        <strain evidence="7">C57BL/6J</strain>
        <tissue evidence="7">Pituitary</tissue>
    </source>
</reference>
<keyword id="KW-1003">Cell membrane</keyword>
<keyword id="KW-0966">Cell projection</keyword>
<keyword id="KW-0472">Membrane</keyword>
<keyword id="KW-1185">Reference proteome</keyword>
<organism>
    <name type="scientific">Mus musculus</name>
    <name type="common">Mouse</name>
    <dbReference type="NCBI Taxonomy" id="10090"/>
    <lineage>
        <taxon>Eukaryota</taxon>
        <taxon>Metazoa</taxon>
        <taxon>Chordata</taxon>
        <taxon>Craniata</taxon>
        <taxon>Vertebrata</taxon>
        <taxon>Euteleostomi</taxon>
        <taxon>Mammalia</taxon>
        <taxon>Eutheria</taxon>
        <taxon>Euarchontoglires</taxon>
        <taxon>Glires</taxon>
        <taxon>Rodentia</taxon>
        <taxon>Myomorpha</taxon>
        <taxon>Muroidea</taxon>
        <taxon>Muridae</taxon>
        <taxon>Murinae</taxon>
        <taxon>Mus</taxon>
        <taxon>Mus</taxon>
    </lineage>
</organism>
<name>ALEX_MOUSE</name>
<dbReference type="EMBL" id="AY519502">
    <property type="protein sequence ID" value="AAS00602.1"/>
    <property type="molecule type" value="mRNA"/>
</dbReference>
<dbReference type="EMBL" id="AL593857">
    <property type="status" value="NOT_ANNOTATED_CDS"/>
    <property type="molecule type" value="Genomic_DNA"/>
</dbReference>
<dbReference type="EMBL" id="AK030489">
    <property type="protein sequence ID" value="BAC26987.1"/>
    <property type="status" value="ALT_INIT"/>
    <property type="molecule type" value="mRNA"/>
</dbReference>
<dbReference type="CCDS" id="CCDS50817.1"/>
<dbReference type="RefSeq" id="NP_001070975.1">
    <property type="nucleotide sequence ID" value="NM_001077507.2"/>
</dbReference>
<dbReference type="RefSeq" id="NP_001297014.1">
    <property type="nucleotide sequence ID" value="NM_001310085.1"/>
</dbReference>
<dbReference type="RefSeq" id="NP_963911.1">
    <property type="nucleotide sequence ID" value="NM_201617.2"/>
</dbReference>
<dbReference type="RefSeq" id="NP_963912.1">
    <property type="nucleotide sequence ID" value="NM_201618.2"/>
</dbReference>
<dbReference type="BioGRID" id="199972">
    <property type="interactions" value="38"/>
</dbReference>
<dbReference type="iPTMnet" id="Q6R0H6"/>
<dbReference type="SwissPalm" id="Q6R0H6"/>
<dbReference type="REPRODUCTION-2DPAGE" id="IPI00471141"/>
<dbReference type="ProteomicsDB" id="296394"/>
<dbReference type="Antibodypedia" id="4152">
    <property type="antibodies" value="800 antibodies from 43 providers"/>
</dbReference>
<dbReference type="DNASU" id="14683"/>
<dbReference type="Ensembl" id="ENSMUST00000109088.8">
    <property type="protein sequence ID" value="ENSMUSP00000104716.2"/>
    <property type="gene ID" value="ENSMUSG00000027523.21"/>
</dbReference>
<dbReference type="Ensembl" id="ENSMUST00000186907.7">
    <property type="protein sequence ID" value="ENSMUSP00000139839.2"/>
    <property type="gene ID" value="ENSMUSG00000027523.21"/>
</dbReference>
<dbReference type="GeneID" id="14683"/>
<dbReference type="UCSC" id="uc008oeu.2">
    <property type="organism name" value="mouse"/>
</dbReference>
<dbReference type="AGR" id="MGI:95777"/>
<dbReference type="CTD" id="2778"/>
<dbReference type="MGI" id="MGI:95777">
    <property type="gene designation" value="Gnas"/>
</dbReference>
<dbReference type="VEuPathDB" id="HostDB:ENSMUSG00000027523"/>
<dbReference type="GeneTree" id="ENSGT00940000156300"/>
<dbReference type="HOGENOM" id="CLU_437395_0_0_1"/>
<dbReference type="OrthoDB" id="9836061at2759"/>
<dbReference type="BioGRID-ORCS" id="14683">
    <property type="hits" value="12 hits in 78 CRISPR screens"/>
</dbReference>
<dbReference type="ChiTaRS" id="Gnas">
    <property type="organism name" value="mouse"/>
</dbReference>
<dbReference type="Proteomes" id="UP000000589">
    <property type="component" value="Chromosome 2"/>
</dbReference>
<dbReference type="Bgee" id="ENSMUSG00000027523">
    <property type="expression patterns" value="Expressed in superior cervical ganglion and 273 other cell types or tissues"/>
</dbReference>
<dbReference type="ExpressionAtlas" id="Q6R0H6">
    <property type="expression patterns" value="baseline and differential"/>
</dbReference>
<dbReference type="GO" id="GO:0030425">
    <property type="term" value="C:dendrite"/>
    <property type="evidence" value="ECO:0000314"/>
    <property type="project" value="MGI"/>
</dbReference>
<dbReference type="GO" id="GO:0005834">
    <property type="term" value="C:heterotrimeric G-protein complex"/>
    <property type="evidence" value="ECO:0000266"/>
    <property type="project" value="MGI"/>
</dbReference>
<dbReference type="GO" id="GO:0016020">
    <property type="term" value="C:membrane"/>
    <property type="evidence" value="ECO:0000314"/>
    <property type="project" value="MGI"/>
</dbReference>
<dbReference type="GO" id="GO:0005886">
    <property type="term" value="C:plasma membrane"/>
    <property type="evidence" value="ECO:0000314"/>
    <property type="project" value="MGI"/>
</dbReference>
<dbReference type="GO" id="GO:0001726">
    <property type="term" value="C:ruffle"/>
    <property type="evidence" value="ECO:0007669"/>
    <property type="project" value="UniProtKB-SubCell"/>
</dbReference>
<dbReference type="GO" id="GO:0010856">
    <property type="term" value="F:adenylate cyclase activator activity"/>
    <property type="evidence" value="ECO:0000314"/>
    <property type="project" value="MGI"/>
</dbReference>
<dbReference type="GO" id="GO:0010854">
    <property type="term" value="F:adenylate cyclase regulator activity"/>
    <property type="evidence" value="ECO:0000315"/>
    <property type="project" value="MGI"/>
</dbReference>
<dbReference type="GO" id="GO:0047391">
    <property type="term" value="F:alkylglycerophosphoethanolamine phosphodiesterase activity"/>
    <property type="evidence" value="ECO:0000266"/>
    <property type="project" value="MGI"/>
</dbReference>
<dbReference type="GO" id="GO:0003925">
    <property type="term" value="F:G protein activity"/>
    <property type="evidence" value="ECO:0000315"/>
    <property type="project" value="MGI"/>
</dbReference>
<dbReference type="GO" id="GO:0003924">
    <property type="term" value="F:GTPase activity"/>
    <property type="evidence" value="ECO:0000266"/>
    <property type="project" value="MGI"/>
</dbReference>
<dbReference type="GO" id="GO:0007191">
    <property type="term" value="P:adenylate cyclase-activating dopamine receptor signaling pathway"/>
    <property type="evidence" value="ECO:0000316"/>
    <property type="project" value="MGI"/>
</dbReference>
<dbReference type="GO" id="GO:0007189">
    <property type="term" value="P:adenylate cyclase-activating G protein-coupled receptor signaling pathway"/>
    <property type="evidence" value="ECO:0000314"/>
    <property type="project" value="MGI"/>
</dbReference>
<dbReference type="GO" id="GO:0051216">
    <property type="term" value="P:cartilage development"/>
    <property type="evidence" value="ECO:0000315"/>
    <property type="project" value="MGI"/>
</dbReference>
<dbReference type="GO" id="GO:0071377">
    <property type="term" value="P:cellular response to glucagon stimulus"/>
    <property type="evidence" value="ECO:0000315"/>
    <property type="project" value="MGI"/>
</dbReference>
<dbReference type="GO" id="GO:0048701">
    <property type="term" value="P:embryonic cranial skeleton morphogenesis"/>
    <property type="evidence" value="ECO:0000315"/>
    <property type="project" value="MGI"/>
</dbReference>
<dbReference type="GO" id="GO:0035116">
    <property type="term" value="P:embryonic hindlimb morphogenesis"/>
    <property type="evidence" value="ECO:0000315"/>
    <property type="project" value="MGI"/>
</dbReference>
<dbReference type="GO" id="GO:0001958">
    <property type="term" value="P:endochondral ossification"/>
    <property type="evidence" value="ECO:0000315"/>
    <property type="project" value="MGI"/>
</dbReference>
<dbReference type="GO" id="GO:0006112">
    <property type="term" value="P:energy reserve metabolic process"/>
    <property type="evidence" value="ECO:0000315"/>
    <property type="project" value="MGI"/>
</dbReference>
<dbReference type="GO" id="GO:0007186">
    <property type="term" value="P:G protein-coupled receptor signaling pathway"/>
    <property type="evidence" value="ECO:0000304"/>
    <property type="project" value="MGI"/>
</dbReference>
<dbReference type="GO" id="GO:0071514">
    <property type="term" value="P:genomic imprinting"/>
    <property type="evidence" value="ECO:0000315"/>
    <property type="project" value="MGI"/>
</dbReference>
<dbReference type="GO" id="GO:0035264">
    <property type="term" value="P:multicellular organism growth"/>
    <property type="evidence" value="ECO:0000315"/>
    <property type="project" value="MGI"/>
</dbReference>
<dbReference type="GO" id="GO:0120162">
    <property type="term" value="P:positive regulation of cold-induced thermogenesis"/>
    <property type="evidence" value="ECO:0000315"/>
    <property type="project" value="YuBioLab"/>
</dbReference>
<dbReference type="GO" id="GO:0032024">
    <property type="term" value="P:positive regulation of insulin secretion"/>
    <property type="evidence" value="ECO:0000314"/>
    <property type="project" value="MGI"/>
</dbReference>
<dbReference type="GO" id="GO:0045669">
    <property type="term" value="P:positive regulation of osteoblast differentiation"/>
    <property type="evidence" value="ECO:0000315"/>
    <property type="project" value="MGI"/>
</dbReference>
<dbReference type="GO" id="GO:0045672">
    <property type="term" value="P:positive regulation of osteoclast differentiation"/>
    <property type="evidence" value="ECO:0000315"/>
    <property type="project" value="MGI"/>
</dbReference>
<dbReference type="GO" id="GO:0040032">
    <property type="term" value="P:post-embryonic body morphogenesis"/>
    <property type="evidence" value="ECO:0000315"/>
    <property type="project" value="MGI"/>
</dbReference>
<dbReference type="GO" id="GO:0009791">
    <property type="term" value="P:post-embryonic development"/>
    <property type="evidence" value="ECO:0000315"/>
    <property type="project" value="MGI"/>
</dbReference>
<dbReference type="GO" id="GO:2000828">
    <property type="term" value="P:regulation of parathyroid hormone secretion"/>
    <property type="evidence" value="ECO:0000315"/>
    <property type="project" value="MGI"/>
</dbReference>
<dbReference type="GO" id="GO:0009410">
    <property type="term" value="P:response to xenobiotic stimulus"/>
    <property type="evidence" value="ECO:0000315"/>
    <property type="project" value="MGI"/>
</dbReference>
<dbReference type="GO" id="GO:0001501">
    <property type="term" value="P:skeletal system development"/>
    <property type="evidence" value="ECO:0000315"/>
    <property type="project" value="MGI"/>
</dbReference>
<dbReference type="GO" id="GO:0043588">
    <property type="term" value="P:skin development"/>
    <property type="evidence" value="ECO:0000315"/>
    <property type="project" value="MGI"/>
</dbReference>
<dbReference type="GO" id="GO:0001894">
    <property type="term" value="P:tissue homeostasis"/>
    <property type="evidence" value="ECO:0000315"/>
    <property type="project" value="MGI"/>
</dbReference>